<evidence type="ECO:0000255" key="1">
    <source>
        <dbReference type="HAMAP-Rule" id="MF_04083"/>
    </source>
</evidence>
<organismHost>
    <name type="scientific">Pan troglodytes</name>
    <name type="common">Chimpanzee</name>
    <dbReference type="NCBI Taxonomy" id="9598"/>
</organismHost>
<dbReference type="EMBL" id="DQ373065">
    <property type="protein sequence ID" value="ABD19499.1"/>
    <property type="molecule type" value="Genomic_RNA"/>
</dbReference>
<dbReference type="SMR" id="Q1A243"/>
<dbReference type="GlyCosmos" id="Q1A243">
    <property type="glycosylation" value="27 sites, No reported glycans"/>
</dbReference>
<dbReference type="Proteomes" id="UP000008436">
    <property type="component" value="Segment"/>
</dbReference>
<dbReference type="GO" id="GO:0044175">
    <property type="term" value="C:host cell endosome membrane"/>
    <property type="evidence" value="ECO:0007669"/>
    <property type="project" value="UniProtKB-SubCell"/>
</dbReference>
<dbReference type="GO" id="GO:0020002">
    <property type="term" value="C:host cell plasma membrane"/>
    <property type="evidence" value="ECO:0007669"/>
    <property type="project" value="UniProtKB-SubCell"/>
</dbReference>
<dbReference type="GO" id="GO:0016020">
    <property type="term" value="C:membrane"/>
    <property type="evidence" value="ECO:0007669"/>
    <property type="project" value="UniProtKB-UniRule"/>
</dbReference>
<dbReference type="GO" id="GO:0019031">
    <property type="term" value="C:viral envelope"/>
    <property type="evidence" value="ECO:0007669"/>
    <property type="project" value="UniProtKB-KW"/>
</dbReference>
<dbReference type="GO" id="GO:0055036">
    <property type="term" value="C:virion membrane"/>
    <property type="evidence" value="ECO:0007669"/>
    <property type="project" value="UniProtKB-SubCell"/>
</dbReference>
<dbReference type="GO" id="GO:0005198">
    <property type="term" value="F:structural molecule activity"/>
    <property type="evidence" value="ECO:0007669"/>
    <property type="project" value="UniProtKB-UniRule"/>
</dbReference>
<dbReference type="GO" id="GO:0075512">
    <property type="term" value="P:clathrin-dependent endocytosis of virus by host cell"/>
    <property type="evidence" value="ECO:0007669"/>
    <property type="project" value="UniProtKB-UniRule"/>
</dbReference>
<dbReference type="GO" id="GO:0039654">
    <property type="term" value="P:fusion of virus membrane with host endosome membrane"/>
    <property type="evidence" value="ECO:0007669"/>
    <property type="project" value="UniProtKB-UniRule"/>
</dbReference>
<dbReference type="GO" id="GO:0019064">
    <property type="term" value="P:fusion of virus membrane with host plasma membrane"/>
    <property type="evidence" value="ECO:0007669"/>
    <property type="project" value="UniProtKB-UniRule"/>
</dbReference>
<dbReference type="GO" id="GO:1903908">
    <property type="term" value="P:positive regulation of plasma membrane raft polarization"/>
    <property type="evidence" value="ECO:0007669"/>
    <property type="project" value="UniProtKB-UniRule"/>
</dbReference>
<dbReference type="GO" id="GO:1903911">
    <property type="term" value="P:positive regulation of receptor clustering"/>
    <property type="evidence" value="ECO:0007669"/>
    <property type="project" value="UniProtKB-UniRule"/>
</dbReference>
<dbReference type="GO" id="GO:0019082">
    <property type="term" value="P:viral protein processing"/>
    <property type="evidence" value="ECO:0007669"/>
    <property type="project" value="UniProtKB-UniRule"/>
</dbReference>
<dbReference type="GO" id="GO:0019062">
    <property type="term" value="P:virion attachment to host cell"/>
    <property type="evidence" value="ECO:0007669"/>
    <property type="project" value="UniProtKB-UniRule"/>
</dbReference>
<dbReference type="CDD" id="cd09909">
    <property type="entry name" value="HIV-1-like_HR1-HR2"/>
    <property type="match status" value="1"/>
</dbReference>
<dbReference type="FunFam" id="1.10.287.210:FF:000001">
    <property type="entry name" value="Envelope glycoprotein gp160"/>
    <property type="match status" value="1"/>
</dbReference>
<dbReference type="FunFam" id="1.20.5.490:FF:000001">
    <property type="entry name" value="Envelope glycoprotein gp160"/>
    <property type="match status" value="1"/>
</dbReference>
<dbReference type="FunFam" id="2.170.40.20:FF:000004">
    <property type="entry name" value="Envelope glycoprotein gp160"/>
    <property type="match status" value="1"/>
</dbReference>
<dbReference type="Gene3D" id="1.10.287.210">
    <property type="match status" value="1"/>
</dbReference>
<dbReference type="Gene3D" id="2.170.40.20">
    <property type="entry name" value="Human immunodeficiency virus 1, Gp160, envelope glycoprotein"/>
    <property type="match status" value="2"/>
</dbReference>
<dbReference type="Gene3D" id="1.20.5.490">
    <property type="entry name" value="Single helix bin"/>
    <property type="match status" value="1"/>
</dbReference>
<dbReference type="HAMAP" id="MF_04083">
    <property type="entry name" value="HIV_ENV"/>
    <property type="match status" value="1"/>
</dbReference>
<dbReference type="InterPro" id="IPR036377">
    <property type="entry name" value="Gp120_core_sf"/>
</dbReference>
<dbReference type="InterPro" id="IPR037527">
    <property type="entry name" value="Gp160"/>
</dbReference>
<dbReference type="InterPro" id="IPR000328">
    <property type="entry name" value="GP41-like"/>
</dbReference>
<dbReference type="InterPro" id="IPR000777">
    <property type="entry name" value="HIV1_Gp120"/>
</dbReference>
<dbReference type="Pfam" id="PF00516">
    <property type="entry name" value="GP120"/>
    <property type="match status" value="2"/>
</dbReference>
<dbReference type="Pfam" id="PF00517">
    <property type="entry name" value="GP41"/>
    <property type="match status" value="1"/>
</dbReference>
<dbReference type="SUPFAM" id="SSF56502">
    <property type="entry name" value="gp120 core"/>
    <property type="match status" value="2"/>
</dbReference>
<dbReference type="SUPFAM" id="SSF58069">
    <property type="entry name" value="Virus ectodomain"/>
    <property type="match status" value="1"/>
</dbReference>
<gene>
    <name evidence="1" type="primary">env</name>
</gene>
<reference key="1">
    <citation type="journal article" date="2006" name="Science">
        <title>Chimpanzee reservoirs of pandemic and nonpandemic HIV-1.</title>
        <authorList>
            <person name="Keele B.F."/>
            <person name="Van Heuverswyn F."/>
            <person name="Li Y."/>
            <person name="Bailes E."/>
            <person name="Takehisa J."/>
            <person name="Santiago M.L."/>
            <person name="Bibollet-Ruche F."/>
            <person name="Chen Y."/>
            <person name="Wain L.V."/>
            <person name="Liegeois F."/>
            <person name="Loul S."/>
            <person name="Ngole E.M."/>
            <person name="Bienvenue Y."/>
            <person name="Delaporte E."/>
            <person name="Brookfield J.F."/>
            <person name="Sharp P.M."/>
            <person name="Shaw G.M."/>
            <person name="Peeters M."/>
            <person name="Hahn B.H."/>
        </authorList>
    </citation>
    <scope>NUCLEOTIDE SEQUENCE [GENOMIC RNA]</scope>
</reference>
<keyword id="KW-0014">AIDS</keyword>
<keyword id="KW-0053">Apoptosis</keyword>
<keyword id="KW-1165">Clathrin-mediated endocytosis of virus by host</keyword>
<keyword id="KW-0165">Cleavage on pair of basic residues</keyword>
<keyword id="KW-0175">Coiled coil</keyword>
<keyword id="KW-1015">Disulfide bond</keyword>
<keyword id="KW-1170">Fusion of virus membrane with host endosomal membrane</keyword>
<keyword id="KW-1168">Fusion of virus membrane with host membrane</keyword>
<keyword id="KW-0325">Glycoprotein</keyword>
<keyword id="KW-1032">Host cell membrane</keyword>
<keyword id="KW-1039">Host endosome</keyword>
<keyword id="KW-1043">Host membrane</keyword>
<keyword id="KW-0945">Host-virus interaction</keyword>
<keyword id="KW-0449">Lipoprotein</keyword>
<keyword id="KW-0472">Membrane</keyword>
<keyword id="KW-0564">Palmitate</keyword>
<keyword id="KW-1185">Reference proteome</keyword>
<keyword id="KW-0732">Signal</keyword>
<keyword id="KW-0812">Transmembrane</keyword>
<keyword id="KW-1133">Transmembrane helix</keyword>
<keyword id="KW-1161">Viral attachment to host cell</keyword>
<keyword id="KW-0261">Viral envelope protein</keyword>
<keyword id="KW-0899">Viral immunoevasion</keyword>
<keyword id="KW-1162">Viral penetration into host cytoplasm</keyword>
<keyword id="KW-0946">Virion</keyword>
<keyword id="KW-1164">Virus endocytosis by host</keyword>
<keyword id="KW-1160">Virus entry into host cell</keyword>
<protein>
    <recommendedName>
        <fullName evidence="1">Envelope glycoprotein gp160</fullName>
    </recommendedName>
    <alternativeName>
        <fullName evidence="1">Env polyprotein</fullName>
    </alternativeName>
    <component>
        <recommendedName>
            <fullName evidence="1">Surface protein gp120</fullName>
            <shortName evidence="1">SU</shortName>
        </recommendedName>
        <alternativeName>
            <fullName evidence="1">Glycoprotein 120</fullName>
            <shortName evidence="1">gp120</shortName>
        </alternativeName>
    </component>
    <component>
        <recommendedName>
            <fullName evidence="1">Transmembrane protein gp41</fullName>
            <shortName evidence="1">TM</shortName>
        </recommendedName>
        <alternativeName>
            <fullName evidence="1">Glycoprotein 41</fullName>
            <shortName evidence="1">gp41</shortName>
        </alternativeName>
    </component>
</protein>
<comment type="function">
    <molecule>Surface protein gp120</molecule>
    <text evidence="1">Attaches the virus to the host lymphoid cell by binding to the primary receptor CD4. This interaction induces a structural rearrangement creating a high affinity binding site for a chemokine coreceptor like CXCR4 and/or CCR5. Acts as a ligand for CD209/DC-SIGN and CLEC4M/DC-SIGNR, which are respectively found on dendritic cells (DCs), and on endothelial cells of liver sinusoids and lymph node sinuses. These interactions allow capture of viral particles at mucosal surfaces by these cells and subsequent transmission to permissive cells. HIV subverts the migration properties of dendritic cells to gain access to CD4+ T-cells in lymph nodes. Virus transmission to permissive T-cells occurs either in trans (without DCs infection, through viral capture and transmission), or in cis (following DCs productive infection, through the usual CD4-gp120 interaction), thereby inducing a robust infection. In trans infection, bound virions remain infectious over days and it is proposed that they are not degraded, but protected in non-lysosomal acidic organelles within the DCs close to the cell membrane thus contributing to the viral infectious potential during DCs' migration from the periphery to the lymphoid tissues. On arrival at lymphoid tissues, intact virions recycle back to DCs' cell surface allowing virus transmission to CD4+ T-cells.</text>
</comment>
<comment type="function">
    <molecule>Transmembrane protein gp41</molecule>
    <text evidence="1">Acts as a class I viral fusion protein. Under the current model, the protein has at least 3 conformational states: pre-fusion native state, pre-hairpin intermediate state, and post-fusion hairpin state. During fusion of viral and target intracellular membranes, the coiled coil regions (heptad repeats) assume a trimer-of-hairpins structure, positioning the fusion peptide in close proximity to the C-terminal region of the ectodomain. The formation of this structure appears to drive apposition and subsequent fusion of viral and target cell membranes. Complete fusion occurs in host cell endosomes and is dynamin-dependent, however some lipid transfer might occur at the plasma membrane. The virus undergoes clathrin-dependent internalization long before endosomal fusion, thus minimizing the surface exposure of conserved viral epitopes during fusion and reducing the efficacy of inhibitors targeting these epitopes. Membranes fusion leads to delivery of the nucleocapsid into the cytoplasm.</text>
</comment>
<comment type="function">
    <molecule>Envelope glycoprotein gp160</molecule>
    <text evidence="1">Oligomerizes in the host endoplasmic reticulum into predominantly trimers. In a second time, gp160 transits in the host Golgi, where glycosylation is completed. The precursor is then proteolytically cleaved in the trans-Golgi and thereby activated by cellular furin or furin-like proteases to produce gp120 and gp41.</text>
</comment>
<comment type="subunit">
    <molecule>Surface protein gp120</molecule>
    <text evidence="1">The mature envelope protein (Env) consists of a homotrimer of non-covalently associated gp120-gp41 heterodimers. The resulting complex protrudes from the virus surface as a spike. There seems to be as few as 10 spikes on the average virion. Interacts with host CD4, CCR5 and CXCR4. Gp120 also interacts with the C-type lectins CD209/DC-SIGN and CLEC4M/DC-SIGNR (collectively referred to as DC-SIGN(R)). Gp120 and gp41 interact with GalCer. Gp120 interacts with host ITGA4/ITGB7 complex; on CD4+ T-cells, this interaction results in rapid activation of integrin ITGAL/LFA-1, which facilitates efficient cell-to-cell spreading of HIV-1. Gp120 interacts with cell-associated heparan sulfate; this interaction increases virus infectivity on permissive cells and may be involved in infection of CD4- cells.</text>
</comment>
<comment type="subunit">
    <molecule>Transmembrane protein gp41</molecule>
    <text evidence="1">The mature envelope protein (Env) consists of a homotrimer of non-covalently associated gp120-gp41 heterodimers. The resulting complex protrudes from the virus surface as a spike. There seems to be as few as 10 spikes on the average virion.</text>
</comment>
<comment type="subcellular location">
    <molecule>Surface protein gp120</molecule>
    <subcellularLocation>
        <location evidence="1">Virion membrane</location>
        <topology evidence="1">Peripheral membrane protein</topology>
    </subcellularLocation>
    <subcellularLocation>
        <location evidence="1">Host cell membrane</location>
        <topology evidence="1">Peripheral membrane protein</topology>
    </subcellularLocation>
    <subcellularLocation>
        <location evidence="1">Host endosome membrane</location>
        <topology evidence="1">Single-pass type I membrane protein</topology>
    </subcellularLocation>
    <text evidence="1">The surface protein is not anchored to the viral envelope, but associates with the extravirion surface through its binding to TM. It is probably concentrated at the site of budding and incorporated into the virions possibly by contacts between the cytoplasmic tail of Env and the N-terminus of Gag.</text>
</comment>
<comment type="subcellular location">
    <molecule>Transmembrane protein gp41</molecule>
    <subcellularLocation>
        <location evidence="1">Virion membrane</location>
        <topology evidence="1">Single-pass type I membrane protein</topology>
    </subcellularLocation>
    <subcellularLocation>
        <location evidence="1">Host cell membrane</location>
        <topology evidence="1">Single-pass type I membrane protein</topology>
    </subcellularLocation>
    <subcellularLocation>
        <location evidence="1">Host endosome membrane</location>
        <topology evidence="1">Single-pass type I membrane protein</topology>
    </subcellularLocation>
    <text evidence="1">It is probably concentrated at the site of budding and incorporated into the virions possibly by contacts between the cytoplasmic tail of Env and the N-terminus of Gag.</text>
</comment>
<comment type="domain">
    <text evidence="1">Some of the most genetically diverse regions of the viral genome are present in Env. They are called variable regions 1 through 5 (V1 through V5). Coreceptor usage of gp120 is determined mainly by the primary structure of the third variable region (V3) in the outer domain of gp120. The sequence of V3 determines which coreceptor, CCR5 and/or CXCR4 (corresponding to R5/macrophage, X4/T cell and R5X4/T cell and macrophage tropism), is used to trigger the fusion potential of the Env complex, and hence which cells the virus can infect. Binding to CCR5 involves a region adjacent in addition to V3.</text>
</comment>
<comment type="domain">
    <text evidence="1">The membrane proximal external region (MPER) present in gp41 is a tryptophan-rich region recognized by the antibodies 2F5, Z13, and 4E10. MPER seems to play a role in fusion.</text>
</comment>
<comment type="domain">
    <text evidence="1">The 17 amino acids long immunosuppressive region is present in many retroviral envelope proteins. Synthetic peptides derived from this relatively conserved sequence inhibit immune function in vitro and in vivo.</text>
</comment>
<comment type="domain">
    <text evidence="1">The YXXL motif is involved in determining the exact site of viral release at the surface of infected mononuclear cells and promotes endocytosis. YXXL and di-leucine endocytosis motifs interact directly or indirectly with the clathrin adapter complexes, opperate independently, and their activities are not additive.</text>
</comment>
<comment type="domain">
    <text evidence="1">The CD4-binding region is targeted by the antibody b12.</text>
</comment>
<comment type="PTM">
    <text evidence="1">Highly glycosylated by host. The high number of glycan on the protein is reffered to as 'glycan shield' because it contributes to hide protein sequence from adaptive immune system.</text>
</comment>
<comment type="PTM">
    <text evidence="1">Palmitoylation of the transmembrane protein and of Env polyprotein (prior to its proteolytic cleavage) is essential for their association with host cell membrane lipid rafts. Palmitoylation is therefore required for envelope trafficking to classical lipid rafts, but not for viral replication.</text>
</comment>
<comment type="PTM">
    <text evidence="1">Specific enzymatic cleavages in vivo yield mature proteins. Envelope glycoproteins are synthesized as an inactive precursor that is heavily N-glycosylated and processed likely by host cell furin in the Golgi to yield the mature SU and TM proteins. The cleavage site between SU and TM requires the minimal sequence [KR]-X-[KR]-R. About 2 of the 9 disulfide bonds of gp41 are reduced by P4HB/PDI, following binding to CD4 receptor.</text>
</comment>
<comment type="miscellaneous">
    <text evidence="1">Inhibitors targeting HIV-1 viral envelope proteins are used as antiretroviral drugs. Attachment of virions to the cell surface via non-specific interactions and CD4 binding can be blocked by inhibitors that include cyanovirin-N, cyclotriazadisulfonamide analogs, PRO 2000, TNX 355 and PRO 542. In addition, BMS 806 can block CD4-induced conformational changes. Env interactions with the coreceptor molecules can be targeted by CCR5 antagonists including SCH-D, maraviroc (UK 427857) and aplaviroc (GW 873140), and the CXCR4 antagonist AMD 070. Fusion of viral and cellular membranes can be inhibited by peptides such as enfuvirtide and tifuvirtide (T 1249). Resistance to inhibitors associated with mutations in Env are observed. Most of the time, single mutations confer only a modest reduction in drug susceptibility. Combination of several mutations is usually required to develop a high-level drug resistance.</text>
</comment>
<comment type="miscellaneous">
    <text evidence="1">HIV-1 lineages are divided in three main groups, M (for Major), O (for Outlier), and N (for New, or Non-M, Non-O). The vast majority of strains found worldwide belong to the group M. Group O seems to be endemic to and largely confined to Cameroon and neighboring countries in West Central Africa, where these viruses represent a small minority of HIV-1 strains. The group N is represented by a limited number of isolates from Cameroonian persons. The group M is further subdivided in 9 clades or subtypes (A to D, F to H, J and K).</text>
</comment>
<comment type="similarity">
    <text evidence="1">Belongs to the HIV-1 env protein family.</text>
</comment>
<proteinExistence type="inferred from homology"/>
<sequence>MKVTEMQKNWLICCLLIGLIKIIGSELWVTVYYGVPVWRDAETVLFCASDAKAHSTEAHNIWATQACVPTDPNPQEVLIPNVTERFDMWKNNMVDQMQEDIISLWEQSLKPCVKLTPLCVTLSCSSWRSVNNSVNQTNHVQMQNCSFNVTTELRDKKKQVYSLFYMGDIIPLDTNNSSGNNSQYRLINCNTTAVTQACPKISFEPIPIYYCAPPGFAIIKCNDQDFNGTGECNNVSTVQCTHGIKPVISTQLILNGSLATSNIVIRNNSKDTLLVQLNESIPINCTRPGNKTRGQVQIGPGMTFYNIENIIGDTRQAYCEVNRTWEQIWNTTKQIIINNRKNITFIPNPGGDLEVTNLMINCGGEFFYCNTSQLFTNQNGNTTGNITLQCRIRQIVNLWTRVGKGIYAPPIKGPINCLSNITGIILDYTKSGTEKYTIYPTGGDMTNLWRQELYKYKVVSIEPIGVAPGKAKRHTVTRQKRAAFGLGALFLGFLGAAGSTMGAASITLTVQARKLLSGIVQQQNNLLRAIEAQQHLLQLSVWGIKQLQARVLAIERYLRDQQILGLWGCSGKSVCYTNVPWNTTWSNNNSYDTIWGNMTWQNWDEQVRNYSGVIFGLLEQAQEQQSINEKSLLELDQWSSLWNWFDITKWLWYIKIFIMVVAGIVGIRIISIIMSMVARVRQGYSPLSLQTLIPTTRGPDRPERTEEDAGELDNGRSVRLVSGFLALAWEDFRNLLLFLYHRLTDCLSILRRTLELLRQNIHKGLQLLNELRIYLWGIIAYWGRELKISAINLLDTTAVAVAEGTDRIIELVQRIGRGILHIPRRIRQGLERALL</sequence>
<accession>Q1A243</accession>
<organism>
    <name type="scientific">Simian immunodeficiency virus (isolate EK505)</name>
    <name type="common">SIV-cpz</name>
    <name type="synonym">Chimpanzee immunodeficiency virus</name>
    <dbReference type="NCBI Taxonomy" id="388912"/>
    <lineage>
        <taxon>Viruses</taxon>
        <taxon>Riboviria</taxon>
        <taxon>Pararnavirae</taxon>
        <taxon>Artverviricota</taxon>
        <taxon>Revtraviricetes</taxon>
        <taxon>Ortervirales</taxon>
        <taxon>Retroviridae</taxon>
        <taxon>Orthoretrovirinae</taxon>
        <taxon>Lentivirus</taxon>
        <taxon>Simian immunodeficiency virus</taxon>
    </lineage>
</organism>
<name>ENV_SIVEK</name>
<feature type="signal peptide" evidence="1">
    <location>
        <begin position="1"/>
        <end position="25"/>
    </location>
</feature>
<feature type="chain" id="PRO_0000249348" description="Envelope glycoprotein gp160" evidence="1">
    <location>
        <begin position="26"/>
        <end position="835"/>
    </location>
</feature>
<feature type="chain" id="PRO_0000441724" description="Surface protein gp120" evidence="1">
    <location>
        <begin position="26"/>
        <end position="481"/>
    </location>
</feature>
<feature type="chain" id="PRO_0000249350" description="Transmembrane protein gp41" evidence="1">
    <location>
        <begin position="482"/>
        <end position="835"/>
    </location>
</feature>
<feature type="topological domain" description="Extracellular" evidence="1">
    <location>
        <begin position="26"/>
        <end position="656"/>
    </location>
</feature>
<feature type="transmembrane region" description="Helical" evidence="1">
    <location>
        <begin position="657"/>
        <end position="677"/>
    </location>
</feature>
<feature type="topological domain" description="Cytoplasmic" evidence="1">
    <location>
        <begin position="678"/>
        <end position="835"/>
    </location>
</feature>
<feature type="region of interest" description="V1" evidence="1">
    <location>
        <begin position="124"/>
        <end position="144"/>
    </location>
</feature>
<feature type="region of interest" description="V2" evidence="1">
    <location>
        <begin position="145"/>
        <end position="189"/>
    </location>
</feature>
<feature type="region of interest" description="V3" evidence="1">
    <location>
        <begin position="285"/>
        <end position="318"/>
    </location>
</feature>
<feature type="region of interest" description="CD4-binding loop" evidence="1">
    <location>
        <begin position="348"/>
        <end position="358"/>
    </location>
</feature>
<feature type="region of interest" description="V4" evidence="1">
    <location>
        <begin position="369"/>
        <end position="390"/>
    </location>
</feature>
<feature type="region of interest" description="V5" evidence="1">
    <location>
        <begin position="433"/>
        <end position="441"/>
    </location>
</feature>
<feature type="region of interest" description="Fusion peptide" evidence="1">
    <location>
        <begin position="482"/>
        <end position="503"/>
    </location>
</feature>
<feature type="region of interest" description="Immunosuppression" evidence="1">
    <location>
        <begin position="545"/>
        <end position="563"/>
    </location>
</feature>
<feature type="region of interest" description="MPER; binding to GalCer" evidence="1">
    <location>
        <begin position="634"/>
        <end position="655"/>
    </location>
</feature>
<feature type="coiled-coil region" evidence="1">
    <location>
        <begin position="605"/>
        <end position="639"/>
    </location>
</feature>
<feature type="short sequence motif" description="YXXL motif; contains endocytosis signal" evidence="1">
    <location>
        <begin position="684"/>
        <end position="687"/>
    </location>
</feature>
<feature type="short sequence motif" description="Di-leucine internalization motif" evidence="1">
    <location>
        <begin position="834"/>
        <end position="835"/>
    </location>
</feature>
<feature type="site" description="Cleavage; by host furin" evidence="1">
    <location>
        <begin position="481"/>
        <end position="482"/>
    </location>
</feature>
<feature type="glycosylation site" description="N-linked (GlcNAc...) asparagine; by host" evidence="1">
    <location>
        <position position="81"/>
    </location>
</feature>
<feature type="glycosylation site" description="N-linked (GlcNAc...) asparagine; by host" evidence="1">
    <location>
        <position position="131"/>
    </location>
</feature>
<feature type="glycosylation site" description="N-linked (GlcNAc...) asparagine; by host" evidence="1">
    <location>
        <position position="135"/>
    </location>
</feature>
<feature type="glycosylation site" description="N-linked (GlcNAc...) asparagine; by host" evidence="1">
    <location>
        <position position="144"/>
    </location>
</feature>
<feature type="glycosylation site" description="N-linked (GlcNAc...) asparagine; by host" evidence="1">
    <location>
        <position position="148"/>
    </location>
</feature>
<feature type="glycosylation site" description="N-linked (GlcNAc...) asparagine; by host" evidence="1">
    <location>
        <position position="175"/>
    </location>
</feature>
<feature type="glycosylation site" description="N-linked (GlcNAc...) asparagine; by host" evidence="1">
    <location>
        <position position="176"/>
    </location>
</feature>
<feature type="glycosylation site" description="N-linked (GlcNAc...) asparagine; by host" evidence="1">
    <location>
        <position position="180"/>
    </location>
</feature>
<feature type="glycosylation site" description="N-linked (GlcNAc...) asparagine; by host" evidence="1">
    <location>
        <position position="190"/>
    </location>
</feature>
<feature type="glycosylation site" description="N-linked (GlcNAc...) asparagine; by host" evidence="1">
    <location>
        <position position="227"/>
    </location>
</feature>
<feature type="glycosylation site" description="N-linked (GlcNAc...) asparagine; by host" evidence="1">
    <location>
        <position position="234"/>
    </location>
</feature>
<feature type="glycosylation site" description="N-linked (GlcNAc...) asparagine; by host" evidence="1">
    <location>
        <position position="255"/>
    </location>
</feature>
<feature type="glycosylation site" description="N-linked (GlcNAc...) asparagine; by host" evidence="1">
    <location>
        <position position="267"/>
    </location>
</feature>
<feature type="glycosylation site" description="N-linked (GlcNAc...) asparagine; by host" evidence="1">
    <location>
        <position position="278"/>
    </location>
</feature>
<feature type="glycosylation site" description="N-linked (GlcNAc...) asparagine; by host" evidence="1">
    <location>
        <position position="284"/>
    </location>
</feature>
<feature type="glycosylation site" description="N-linked (GlcNAc...) asparagine; by host" evidence="1">
    <location>
        <position position="290"/>
    </location>
</feature>
<feature type="glycosylation site" description="N-linked (GlcNAc...) asparagine; by host" evidence="1">
    <location>
        <position position="322"/>
    </location>
</feature>
<feature type="glycosylation site" description="N-linked (GlcNAc...) asparagine; by host" evidence="1">
    <location>
        <position position="330"/>
    </location>
</feature>
<feature type="glycosylation site" description="N-linked (GlcNAc...) asparagine; by host" evidence="1">
    <location>
        <position position="342"/>
    </location>
</feature>
<feature type="glycosylation site" description="N-linked (GlcNAc...) asparagine; by host" evidence="1">
    <location>
        <position position="370"/>
    </location>
</feature>
<feature type="glycosylation site" description="N-linked (GlcNAc...) asparagine; by host" evidence="1">
    <location>
        <position position="381"/>
    </location>
</feature>
<feature type="glycosylation site" description="N-linked (GlcNAc...) asparagine; by host" evidence="1">
    <location>
        <position position="385"/>
    </location>
</feature>
<feature type="glycosylation site" description="N-linked (GlcNAc...) asparagine; by host" evidence="1">
    <location>
        <position position="420"/>
    </location>
</feature>
<feature type="glycosylation site" description="N-linked (GlcNAc...) asparagine; by host" evidence="1">
    <location>
        <position position="582"/>
    </location>
</feature>
<feature type="glycosylation site" description="N-linked (GlcNAc...) asparagine; by host" evidence="1">
    <location>
        <position position="588"/>
    </location>
</feature>
<feature type="glycosylation site" description="N-linked (GlcNAc...) asparagine; by host" evidence="1">
    <location>
        <position position="597"/>
    </location>
</feature>
<feature type="glycosylation site" description="N-linked (GlcNAc...) asparagine; by host" evidence="1">
    <location>
        <position position="609"/>
    </location>
</feature>
<feature type="disulfide bond" evidence="1">
    <location>
        <begin position="47"/>
        <end position="67"/>
    </location>
</feature>
<feature type="disulfide bond" evidence="1">
    <location>
        <begin position="112"/>
        <end position="198"/>
    </location>
</feature>
<feature type="disulfide bond" evidence="1">
    <location>
        <begin position="119"/>
        <end position="189"/>
    </location>
</feature>
<feature type="disulfide bond" evidence="1">
    <location>
        <begin position="124"/>
        <end position="145"/>
    </location>
</feature>
<feature type="disulfide bond" evidence="1">
    <location>
        <begin position="211"/>
        <end position="240"/>
    </location>
</feature>
<feature type="disulfide bond" evidence="1">
    <location>
        <begin position="221"/>
        <end position="232"/>
    </location>
</feature>
<feature type="disulfide bond" evidence="1">
    <location>
        <begin position="285"/>
        <end position="319"/>
    </location>
</feature>
<feature type="disulfide bond" evidence="1">
    <location>
        <begin position="362"/>
        <end position="417"/>
    </location>
</feature>
<feature type="disulfide bond" evidence="1">
    <location>
        <begin position="369"/>
        <end position="390"/>
    </location>
</feature>
<feature type="disulfide bond" evidence="1">
    <location>
        <begin position="569"/>
        <end position="575"/>
    </location>
</feature>